<dbReference type="EMBL" id="MG788754">
    <property type="protein sequence ID" value="AYM94129.1"/>
    <property type="molecule type" value="mRNA"/>
</dbReference>
<dbReference type="SMR" id="A0A3G2FQK2"/>
<dbReference type="GO" id="GO:0005615">
    <property type="term" value="C:extracellular space"/>
    <property type="evidence" value="ECO:0007669"/>
    <property type="project" value="TreeGrafter"/>
</dbReference>
<dbReference type="GO" id="GO:0042151">
    <property type="term" value="C:nematocyst"/>
    <property type="evidence" value="ECO:0007669"/>
    <property type="project" value="UniProtKB-SubCell"/>
</dbReference>
<dbReference type="GO" id="GO:0099106">
    <property type="term" value="F:ion channel regulator activity"/>
    <property type="evidence" value="ECO:0007669"/>
    <property type="project" value="UniProtKB-KW"/>
</dbReference>
<dbReference type="GO" id="GO:0004867">
    <property type="term" value="F:serine-type endopeptidase inhibitor activity"/>
    <property type="evidence" value="ECO:0007669"/>
    <property type="project" value="UniProtKB-KW"/>
</dbReference>
<dbReference type="GO" id="GO:0090729">
    <property type="term" value="F:toxin activity"/>
    <property type="evidence" value="ECO:0007669"/>
    <property type="project" value="UniProtKB-KW"/>
</dbReference>
<dbReference type="FunFam" id="4.10.410.10:FF:000021">
    <property type="entry name" value="Serine protease inhibitor, putative"/>
    <property type="match status" value="1"/>
</dbReference>
<dbReference type="Gene3D" id="4.10.410.10">
    <property type="entry name" value="Pancreatic trypsin inhibitor Kunitz domain"/>
    <property type="match status" value="1"/>
</dbReference>
<dbReference type="InterPro" id="IPR002223">
    <property type="entry name" value="Kunitz_BPTI"/>
</dbReference>
<dbReference type="InterPro" id="IPR036880">
    <property type="entry name" value="Kunitz_BPTI_sf"/>
</dbReference>
<dbReference type="InterPro" id="IPR020901">
    <property type="entry name" value="Prtase_inh_Kunz-CS"/>
</dbReference>
<dbReference type="InterPro" id="IPR050098">
    <property type="entry name" value="TFPI/VKTCI-like"/>
</dbReference>
<dbReference type="PANTHER" id="PTHR10083:SF381">
    <property type="entry name" value="BPTI_KUNITZ INHIBITOR DOMAIN-CONTAINING PROTEIN"/>
    <property type="match status" value="1"/>
</dbReference>
<dbReference type="PANTHER" id="PTHR10083">
    <property type="entry name" value="KUNITZ-TYPE PROTEASE INHIBITOR-RELATED"/>
    <property type="match status" value="1"/>
</dbReference>
<dbReference type="Pfam" id="PF00014">
    <property type="entry name" value="Kunitz_BPTI"/>
    <property type="match status" value="1"/>
</dbReference>
<dbReference type="PRINTS" id="PR00759">
    <property type="entry name" value="BASICPTASE"/>
</dbReference>
<dbReference type="SMART" id="SM00131">
    <property type="entry name" value="KU"/>
    <property type="match status" value="1"/>
</dbReference>
<dbReference type="SUPFAM" id="SSF57362">
    <property type="entry name" value="BPTI-like"/>
    <property type="match status" value="1"/>
</dbReference>
<dbReference type="PROSITE" id="PS00280">
    <property type="entry name" value="BPTI_KUNITZ_1"/>
    <property type="match status" value="1"/>
</dbReference>
<dbReference type="PROSITE" id="PS50279">
    <property type="entry name" value="BPTI_KUNITZ_2"/>
    <property type="match status" value="1"/>
</dbReference>
<organism>
    <name type="scientific">Heteractis magnifica</name>
    <name type="common">Magnificent sea anemone</name>
    <name type="synonym">Radianthus magnifica</name>
    <dbReference type="NCBI Taxonomy" id="38281"/>
    <lineage>
        <taxon>Eukaryota</taxon>
        <taxon>Metazoa</taxon>
        <taxon>Cnidaria</taxon>
        <taxon>Anthozoa</taxon>
        <taxon>Hexacorallia</taxon>
        <taxon>Actiniaria</taxon>
        <taxon>Stichodactylidae</taxon>
        <taxon>Heteractis</taxon>
    </lineage>
</organism>
<reference key="1">
    <citation type="journal article" date="2018" name="Russ. J. Bioorg. Chem.">
        <title>New IQ-peptide of the Kunitz-type from the Heteractis magnifica sea anemone exhibits neuroprotective activity in a model of Alzheimer's disease.</title>
        <authorList>
            <person name="Kvetkina A.N."/>
            <person name="Leychenko E.V."/>
            <person name="Yurchenko E.A."/>
            <person name="Pislyagin E.A."/>
            <person name="Peigneur S."/>
            <person name="Tytgat Y."/>
            <person name="Isaeva M.P."/>
            <person name="Aminin D.L."/>
            <person name="Kozlovskaya E.P."/>
        </authorList>
    </citation>
    <scope>NUCLEOTIDE SEQUENCE [MRNA]</scope>
    <scope>FUNCTION</scope>
    <scope>RECOMBINANT EXPRESSION</scope>
</reference>
<reference key="2">
    <citation type="journal article" date="2022" name="Int. J. Mol. Sci.">
        <title>Kunitz-type peptides from sea anemones protect neuronal cells against parkinson's disease inductors via inhibition of ROS production and atp-induced P2X7 receptor activation.</title>
        <authorList>
            <person name="Kvetkina A."/>
            <person name="Pislyagin E."/>
            <person name="Menchinskaya E."/>
            <person name="Yurchenko E."/>
            <person name="Kalina R."/>
            <person name="Kozlovskiy S."/>
            <person name="Kaluzhskiy L."/>
            <person name="Menshov A."/>
            <person name="Kim N."/>
            <person name="Peigneur S."/>
            <person name="Tytgat J."/>
            <person name="Ivanov A."/>
            <person name="Ayvazyan N."/>
            <person name="Leychenko E."/>
            <person name="Aminin D."/>
        </authorList>
    </citation>
    <scope>FUNCTION</scope>
    <scope>BIOPHYSICOCHEMICAL PROPERTIES</scope>
</reference>
<accession>A0A3G2FQK2</accession>
<evidence type="ECO:0000250" key="1">
    <source>
        <dbReference type="UniProtKB" id="P0DMJ5"/>
    </source>
</evidence>
<evidence type="ECO:0000250" key="2">
    <source>
        <dbReference type="UniProtKB" id="P31713"/>
    </source>
</evidence>
<evidence type="ECO:0000255" key="3"/>
<evidence type="ECO:0000269" key="4">
    <source>
    </source>
</evidence>
<evidence type="ECO:0000269" key="5">
    <source ref="1"/>
</evidence>
<evidence type="ECO:0000303" key="6">
    <source ref="1"/>
</evidence>
<evidence type="ECO:0000305" key="7"/>
<evidence type="ECO:0000305" key="8">
    <source ref="1"/>
</evidence>
<sequence length="72" mass="8238">GFYFRSIQGFYFKRIQGNICSEPKKVGRCRGSFPRFYFDSETGKCTPFIYGGCGGNGNNFETLRRCRAICRA</sequence>
<protein>
    <recommendedName>
        <fullName evidence="7">PI-stichotoxin-Hmg3d</fullName>
        <shortName evidence="7">PI-SHTX-Hmg3d</shortName>
    </recommendedName>
    <alternativeName>
        <fullName evidence="6">IQ-peptide</fullName>
    </alternativeName>
    <alternativeName>
        <fullName evidence="6">Kunitz-type serine protease inhibitor HMIQ3c1</fullName>
    </alternativeName>
</protein>
<name>3DPD_HETMG</name>
<keyword id="KW-0165">Cleavage on pair of basic residues</keyword>
<keyword id="KW-1015">Disulfide bond</keyword>
<keyword id="KW-0872">Ion channel impairing toxin</keyword>
<keyword id="KW-0166">Nematocyst</keyword>
<keyword id="KW-0646">Protease inhibitor</keyword>
<keyword id="KW-0964">Secreted</keyword>
<keyword id="KW-0722">Serine protease inhibitor</keyword>
<keyword id="KW-0732">Signal</keyword>
<keyword id="KW-0800">Toxin</keyword>
<comment type="function">
    <text evidence="4 5">Serine protease inhibitor that inhibits trypsin (Ki=50 nM) (Ref.1). This protease exhibits a pronounced neuroprotective activity on Alzheimer's disease model (Ref.1). It enhances cell viability by 39.4% when neuroblastoma cells are in presence of the toxin component beta-amyloid, but has no effect when these cells are in presence of 6-OHDA (Ref.1). It induces an effective decrease of reactive oxygen species (ROS) level in the cells treated with oxidative stress inducers (PubMed:35563513). It also protects these cells by inhibiting ATP-induced purinoceptor activation (PubMed:35563513). Its binding affinity to P2RX7 is moderate (Kd=43.3 uM) (PubMed:35563513).</text>
</comment>
<comment type="biophysicochemical properties">
    <temperatureDependence>
        <text evidence="4">Thermostable. Complete trypsin inhibition at all temperature ranges (25-100 degrees Celsius).</text>
    </temperatureDependence>
</comment>
<comment type="subcellular location">
    <subcellularLocation>
        <location evidence="1">Secreted</location>
    </subcellularLocation>
    <subcellularLocation>
        <location evidence="1">Nematocyst</location>
    </subcellularLocation>
</comment>
<comment type="miscellaneous">
    <text evidence="5">Negative results: does not show activity on the eight potassium channels tested (Kv1.1/KCNA1, Kv1.2/KCNA2, Kv1.3/KCNA3, Kv1.4/KCNA4, Kv1.5/KCNA5, Kv1.6/KCNA8, Shaker IR, and Kv11.1/KCNH2/ERG1).</text>
</comment>
<comment type="miscellaneous">
    <text evidence="7">A synonymy between H.magnifica and R.crispa is controversial.</text>
</comment>
<comment type="similarity">
    <text evidence="7">Belongs to the venom Kunitz-type family. Sea anemone type 2 potassium channel toxin subfamily.</text>
</comment>
<proteinExistence type="evidence at protein level"/>
<feature type="signal peptide" evidence="3">
    <location>
        <begin position="1" status="less than"/>
        <end position="14"/>
    </location>
</feature>
<feature type="chain" id="PRO_0000453393" description="PI-stichotoxin-Hmg3d" evidence="7">
    <location>
        <begin position="15"/>
        <end position="72"/>
    </location>
</feature>
<feature type="domain" description="BPTI/Kunitz inhibitor" evidence="3">
    <location>
        <begin position="20"/>
        <end position="70"/>
    </location>
</feature>
<feature type="disulfide bond" evidence="2">
    <location>
        <begin position="20"/>
        <end position="70"/>
    </location>
</feature>
<feature type="disulfide bond" evidence="2">
    <location>
        <begin position="29"/>
        <end position="53"/>
    </location>
</feature>
<feature type="disulfide bond" evidence="2">
    <location>
        <begin position="45"/>
        <end position="66"/>
    </location>
</feature>
<feature type="non-terminal residue" evidence="8">
    <location>
        <position position="1"/>
    </location>
</feature>